<keyword id="KW-0067">ATP-binding</keyword>
<keyword id="KW-0093">Biotin biosynthesis</keyword>
<keyword id="KW-0436">Ligase</keyword>
<keyword id="KW-0460">Magnesium</keyword>
<keyword id="KW-0547">Nucleotide-binding</keyword>
<comment type="function">
    <text evidence="1">Catalyzes the transformation of pimelate into pimeloyl-CoA with concomitant hydrolysis of ATP to AMP.</text>
</comment>
<comment type="catalytic activity">
    <reaction evidence="1">
        <text>heptanedioate + ATP + CoA = 6-carboxyhexanoyl-CoA + AMP + diphosphate</text>
        <dbReference type="Rhea" id="RHEA:14781"/>
        <dbReference type="ChEBI" id="CHEBI:30616"/>
        <dbReference type="ChEBI" id="CHEBI:33019"/>
        <dbReference type="ChEBI" id="CHEBI:36165"/>
        <dbReference type="ChEBI" id="CHEBI:57287"/>
        <dbReference type="ChEBI" id="CHEBI:57360"/>
        <dbReference type="ChEBI" id="CHEBI:456215"/>
        <dbReference type="EC" id="6.2.1.14"/>
    </reaction>
</comment>
<comment type="cofactor">
    <cofactor evidence="1">
        <name>Mg(2+)</name>
        <dbReference type="ChEBI" id="CHEBI:18420"/>
    </cofactor>
</comment>
<comment type="pathway">
    <text evidence="1">Metabolic intermediate metabolism; pimeloyl-CoA biosynthesis; pimeloyl-CoA from pimelate: step 1/1.</text>
</comment>
<comment type="subunit">
    <text evidence="1">Homodimer.</text>
</comment>
<comment type="similarity">
    <text evidence="1">Belongs to the BioW family.</text>
</comment>
<feature type="chain" id="PRO_0000412080" description="6-carboxyhexanoate--CoA ligase">
    <location>
        <begin position="1"/>
        <end position="258"/>
    </location>
</feature>
<accession>E8VHU4</accession>
<name>BIOW_BACST</name>
<reference key="1">
    <citation type="journal article" date="2011" name="J. Bacteriol.">
        <title>Complete genome sequence of Bacillus subtilis BSn5, an endophytic bacterium of Amorphophallus konjac with antimicrobial activity to plant pathogen Erwinia carotovora subsp. carotovora.</title>
        <authorList>
            <person name="Deng Y."/>
            <person name="Zhu Y."/>
            <person name="Wang P."/>
            <person name="Zhu L."/>
            <person name="Zheng J."/>
            <person name="Li R."/>
            <person name="Ruan L."/>
            <person name="Peng D."/>
            <person name="Sun M."/>
        </authorList>
    </citation>
    <scope>NUCLEOTIDE SEQUENCE [LARGE SCALE GENOMIC DNA]</scope>
    <source>
        <strain>BSn5</strain>
    </source>
</reference>
<sequence length="258" mass="29527">MQEETFYSVRMRASMNGSHEDGGKHISGGERLIPFHEMKHTVNALLEKGLSHSRGKPDFMQIQFEEVYESIKTIQPLPVHTNEVSCPEEGQKLARLLLEKEGVSRDVIEKAYEQIPEWSDVRGAVLFDIHTGKRMDQTKEKGVRVSRMDWPDANFEKWALHSHVPAHSRIKEALALASKVSWHPAAVAELCWSDDPDYITGYVAGKKMGYQRITAMKEYGTEEGCRVFFIDGSNDVNTYIHDLEKQPILIEWEEDHDS</sequence>
<protein>
    <recommendedName>
        <fullName evidence="1">6-carboxyhexanoate--CoA ligase</fullName>
        <ecNumber evidence="1">6.2.1.14</ecNumber>
    </recommendedName>
    <alternativeName>
        <fullName evidence="1">Pimeloyl-CoA synthase</fullName>
    </alternativeName>
</protein>
<organism>
    <name type="scientific">Bacillus subtilis (strain BSn5)</name>
    <dbReference type="NCBI Taxonomy" id="936156"/>
    <lineage>
        <taxon>Bacteria</taxon>
        <taxon>Bacillati</taxon>
        <taxon>Bacillota</taxon>
        <taxon>Bacilli</taxon>
        <taxon>Bacillales</taxon>
        <taxon>Bacillaceae</taxon>
        <taxon>Bacillus</taxon>
    </lineage>
</organism>
<proteinExistence type="inferred from homology"/>
<evidence type="ECO:0000255" key="1">
    <source>
        <dbReference type="HAMAP-Rule" id="MF_00668"/>
    </source>
</evidence>
<gene>
    <name evidence="1" type="primary">bioW</name>
    <name type="ordered locus">BSn5_05960</name>
</gene>
<dbReference type="EC" id="6.2.1.14" evidence="1"/>
<dbReference type="EMBL" id="CP002468">
    <property type="protein sequence ID" value="ADV93820.1"/>
    <property type="molecule type" value="Genomic_DNA"/>
</dbReference>
<dbReference type="RefSeq" id="WP_015714551.1">
    <property type="nucleotide sequence ID" value="NZ_VDQY01000004.1"/>
</dbReference>
<dbReference type="SMR" id="E8VHU4"/>
<dbReference type="KEGG" id="bsn:BSn5_05960"/>
<dbReference type="HOGENOM" id="CLU_076858_0_0_9"/>
<dbReference type="UniPathway" id="UPA00999">
    <property type="reaction ID" value="UER00351"/>
</dbReference>
<dbReference type="GO" id="GO:0042410">
    <property type="term" value="F:6-carboxyhexanoate-CoA ligase activity"/>
    <property type="evidence" value="ECO:0007669"/>
    <property type="project" value="UniProtKB-UniRule"/>
</dbReference>
<dbReference type="GO" id="GO:0005524">
    <property type="term" value="F:ATP binding"/>
    <property type="evidence" value="ECO:0007669"/>
    <property type="project" value="UniProtKB-KW"/>
</dbReference>
<dbReference type="GO" id="GO:0000287">
    <property type="term" value="F:magnesium ion binding"/>
    <property type="evidence" value="ECO:0007669"/>
    <property type="project" value="UniProtKB-UniRule"/>
</dbReference>
<dbReference type="GO" id="GO:0009102">
    <property type="term" value="P:biotin biosynthetic process"/>
    <property type="evidence" value="ECO:0007669"/>
    <property type="project" value="UniProtKB-UniRule"/>
</dbReference>
<dbReference type="HAMAP" id="MF_00668">
    <property type="entry name" value="BioW"/>
    <property type="match status" value="1"/>
</dbReference>
<dbReference type="InterPro" id="IPR005499">
    <property type="entry name" value="BioW"/>
</dbReference>
<dbReference type="NCBIfam" id="TIGR01204">
    <property type="entry name" value="bioW"/>
    <property type="match status" value="1"/>
</dbReference>
<dbReference type="NCBIfam" id="NF002360">
    <property type="entry name" value="PRK01322.1"/>
    <property type="match status" value="1"/>
</dbReference>
<dbReference type="Pfam" id="PF03744">
    <property type="entry name" value="BioW"/>
    <property type="match status" value="1"/>
</dbReference>